<feature type="signal peptide" evidence="3">
    <location>
        <begin position="1"/>
        <end position="16"/>
    </location>
</feature>
<feature type="chain" id="PRO_0000041454" description="Protein Wnt-8c">
    <location>
        <begin position="17"/>
        <end position="357"/>
    </location>
</feature>
<feature type="lipid moiety-binding region" description="O-palmitoleoyl serine" evidence="1">
    <location>
        <position position="187"/>
    </location>
</feature>
<feature type="glycosylation site" description="N-linked (GlcNAc...) asparagine" evidence="3">
    <location>
        <position position="104"/>
    </location>
</feature>
<feature type="glycosylation site" description="N-linked (GlcNAc...) asparagine" evidence="3">
    <location>
        <position position="263"/>
    </location>
</feature>
<feature type="glycosylation site" description="N-linked (GlcNAc...) asparagine" evidence="3">
    <location>
        <position position="282"/>
    </location>
</feature>
<feature type="glycosylation site" description="N-linked (GlcNAc...) asparagine" evidence="3">
    <location>
        <position position="346"/>
    </location>
</feature>
<feature type="disulfide bond" evidence="1">
    <location>
        <begin position="55"/>
        <end position="66"/>
    </location>
</feature>
<feature type="disulfide bond" evidence="1">
    <location>
        <begin position="105"/>
        <end position="113"/>
    </location>
</feature>
<feature type="disulfide bond" evidence="1">
    <location>
        <begin position="115"/>
        <end position="133"/>
    </location>
</feature>
<feature type="disulfide bond" evidence="1">
    <location>
        <begin position="181"/>
        <end position="195"/>
    </location>
</feature>
<feature type="disulfide bond" evidence="1">
    <location>
        <begin position="183"/>
        <end position="190"/>
    </location>
</feature>
<feature type="disulfide bond" evidence="1">
    <location>
        <begin position="260"/>
        <end position="298"/>
    </location>
</feature>
<feature type="disulfide bond" evidence="1">
    <location>
        <begin position="276"/>
        <end position="291"/>
    </location>
</feature>
<feature type="disulfide bond" evidence="1">
    <location>
        <begin position="313"/>
        <end position="328"/>
    </location>
</feature>
<feature type="disulfide bond" evidence="1">
    <location>
        <begin position="315"/>
        <end position="325"/>
    </location>
</feature>
<feature type="disulfide bond" evidence="1">
    <location>
        <begin position="320"/>
        <end position="321"/>
    </location>
</feature>
<keyword id="KW-0217">Developmental protein</keyword>
<keyword id="KW-1015">Disulfide bond</keyword>
<keyword id="KW-0272">Extracellular matrix</keyword>
<keyword id="KW-0325">Glycoprotein</keyword>
<keyword id="KW-0449">Lipoprotein</keyword>
<keyword id="KW-1185">Reference proteome</keyword>
<keyword id="KW-0964">Secreted</keyword>
<keyword id="KW-0732">Signal</keyword>
<keyword id="KW-0879">Wnt signaling pathway</keyword>
<protein>
    <recommendedName>
        <fullName>Protein Wnt-8c</fullName>
    </recommendedName>
    <alternativeName>
        <fullName>CWnt-8</fullName>
    </alternativeName>
</protein>
<gene>
    <name type="primary">WNT8C</name>
</gene>
<dbReference type="EMBL" id="U02097">
    <property type="protein sequence ID" value="AAA18933.1"/>
    <property type="molecule type" value="mRNA"/>
</dbReference>
<dbReference type="PIR" id="I50690">
    <property type="entry name" value="I50690"/>
</dbReference>
<dbReference type="RefSeq" id="NP_990862.1">
    <property type="nucleotide sequence ID" value="NM_205531.1"/>
</dbReference>
<dbReference type="SMR" id="P51030"/>
<dbReference type="FunCoup" id="P51030">
    <property type="interactions" value="89"/>
</dbReference>
<dbReference type="STRING" id="9031.ENSGALP00000055561"/>
<dbReference type="GlyCosmos" id="P51030">
    <property type="glycosylation" value="4 sites, No reported glycans"/>
</dbReference>
<dbReference type="GlyGen" id="P51030">
    <property type="glycosylation" value="4 sites"/>
</dbReference>
<dbReference type="PaxDb" id="9031-ENSGALP00000009803"/>
<dbReference type="GeneID" id="396543"/>
<dbReference type="KEGG" id="gga:396543"/>
<dbReference type="CTD" id="7478"/>
<dbReference type="VEuPathDB" id="HostDB:geneid_396543"/>
<dbReference type="eggNOG" id="KOG3913">
    <property type="taxonomic scope" value="Eukaryota"/>
</dbReference>
<dbReference type="InParanoid" id="P51030"/>
<dbReference type="OrthoDB" id="5945655at2759"/>
<dbReference type="PhylomeDB" id="P51030"/>
<dbReference type="PRO" id="PR:P51030"/>
<dbReference type="Proteomes" id="UP000000539">
    <property type="component" value="Unassembled WGS sequence"/>
</dbReference>
<dbReference type="GO" id="GO:0005615">
    <property type="term" value="C:extracellular space"/>
    <property type="evidence" value="ECO:0000318"/>
    <property type="project" value="GO_Central"/>
</dbReference>
<dbReference type="GO" id="GO:0005125">
    <property type="term" value="F:cytokine activity"/>
    <property type="evidence" value="ECO:0000318"/>
    <property type="project" value="GO_Central"/>
</dbReference>
<dbReference type="GO" id="GO:0005109">
    <property type="term" value="F:frizzled binding"/>
    <property type="evidence" value="ECO:0000318"/>
    <property type="project" value="GO_Central"/>
</dbReference>
<dbReference type="GO" id="GO:0060070">
    <property type="term" value="P:canonical Wnt signaling pathway"/>
    <property type="evidence" value="ECO:0000318"/>
    <property type="project" value="GO_Central"/>
</dbReference>
<dbReference type="GO" id="GO:0045165">
    <property type="term" value="P:cell fate commitment"/>
    <property type="evidence" value="ECO:0000318"/>
    <property type="project" value="GO_Central"/>
</dbReference>
<dbReference type="GO" id="GO:0035116">
    <property type="term" value="P:embryonic hindlimb morphogenesis"/>
    <property type="evidence" value="ECO:0000315"/>
    <property type="project" value="AgBase"/>
</dbReference>
<dbReference type="GO" id="GO:0060173">
    <property type="term" value="P:limb development"/>
    <property type="evidence" value="ECO:0000304"/>
    <property type="project" value="AgBase"/>
</dbReference>
<dbReference type="GO" id="GO:0030182">
    <property type="term" value="P:neuron differentiation"/>
    <property type="evidence" value="ECO:0000318"/>
    <property type="project" value="GO_Central"/>
</dbReference>
<dbReference type="GO" id="GO:0045743">
    <property type="term" value="P:positive regulation of fibroblast growth factor receptor signaling pathway"/>
    <property type="evidence" value="ECO:0000315"/>
    <property type="project" value="AgBase"/>
</dbReference>
<dbReference type="GO" id="GO:0060828">
    <property type="term" value="P:regulation of canonical Wnt signaling pathway"/>
    <property type="evidence" value="ECO:0000314"/>
    <property type="project" value="AgBase"/>
</dbReference>
<dbReference type="GO" id="GO:0090270">
    <property type="term" value="P:regulation of fibroblast growth factor production"/>
    <property type="evidence" value="ECO:0000315"/>
    <property type="project" value="AgBase"/>
</dbReference>
<dbReference type="CDD" id="cd19351">
    <property type="entry name" value="Wnt_Wnt8a"/>
    <property type="match status" value="1"/>
</dbReference>
<dbReference type="FunFam" id="3.30.2460.20:FF:000003">
    <property type="entry name" value="Protein Wnt"/>
    <property type="match status" value="1"/>
</dbReference>
<dbReference type="Gene3D" id="3.30.2460.20">
    <property type="match status" value="1"/>
</dbReference>
<dbReference type="InterPro" id="IPR034312">
    <property type="entry name" value="Protein_Wnt-8A/8C"/>
</dbReference>
<dbReference type="InterPro" id="IPR005817">
    <property type="entry name" value="Wnt"/>
</dbReference>
<dbReference type="InterPro" id="IPR013301">
    <property type="entry name" value="Wnt8"/>
</dbReference>
<dbReference type="InterPro" id="IPR043158">
    <property type="entry name" value="Wnt_C"/>
</dbReference>
<dbReference type="InterPro" id="IPR018161">
    <property type="entry name" value="Wnt_CS"/>
</dbReference>
<dbReference type="PANTHER" id="PTHR12027:SF92">
    <property type="entry name" value="PROTEIN WNT-8A"/>
    <property type="match status" value="1"/>
</dbReference>
<dbReference type="PANTHER" id="PTHR12027">
    <property type="entry name" value="WNT RELATED"/>
    <property type="match status" value="1"/>
</dbReference>
<dbReference type="Pfam" id="PF00110">
    <property type="entry name" value="wnt"/>
    <property type="match status" value="1"/>
</dbReference>
<dbReference type="PRINTS" id="PR01892">
    <property type="entry name" value="WNT8PROTEIN"/>
</dbReference>
<dbReference type="PRINTS" id="PR01349">
    <property type="entry name" value="WNTPROTEIN"/>
</dbReference>
<dbReference type="SMART" id="SM00097">
    <property type="entry name" value="WNT1"/>
    <property type="match status" value="1"/>
</dbReference>
<dbReference type="PROSITE" id="PS00246">
    <property type="entry name" value="WNT1"/>
    <property type="match status" value="1"/>
</dbReference>
<sequence>MRGSTFLLLSIVGIYGAILNAAAWSVNNFLMTGPKAYLTYSSSVAAGAQSGMEECKFQFGWERWNCPESALQLSTHNRLRSATRETSFVHAISSAGVMYTLTRNCSLGDFESCGCDDSRNGRVGGRGWVWGGCSDNVEFGERISKLFVDALETGHDTRALINLHNNEVGRLAVKATMKRACKCHGVSGSCSIQTCWLQLADFREIGNYLKMKYDQAHKLEMDKRRMRAGNSADSRGATAETFHHVHSTELVFLEDSPDYCTRNASLGHHGTEGRECLQTGKNLSQWERRSCRRLSTECGLKVEERRTEVVSSCNCKFHWCCTVRCEQCRQLVAKHFCARRDAAVANHTKRRNKGHRR</sequence>
<evidence type="ECO:0000250" key="1">
    <source>
        <dbReference type="UniProtKB" id="P28026"/>
    </source>
</evidence>
<evidence type="ECO:0000250" key="2">
    <source>
        <dbReference type="UniProtKB" id="P56704"/>
    </source>
</evidence>
<evidence type="ECO:0000255" key="3"/>
<evidence type="ECO:0000305" key="4"/>
<name>WNT8C_CHICK</name>
<organism>
    <name type="scientific">Gallus gallus</name>
    <name type="common">Chicken</name>
    <dbReference type="NCBI Taxonomy" id="9031"/>
    <lineage>
        <taxon>Eukaryota</taxon>
        <taxon>Metazoa</taxon>
        <taxon>Chordata</taxon>
        <taxon>Craniata</taxon>
        <taxon>Vertebrata</taxon>
        <taxon>Euteleostomi</taxon>
        <taxon>Archelosauria</taxon>
        <taxon>Archosauria</taxon>
        <taxon>Dinosauria</taxon>
        <taxon>Saurischia</taxon>
        <taxon>Theropoda</taxon>
        <taxon>Coelurosauria</taxon>
        <taxon>Aves</taxon>
        <taxon>Neognathae</taxon>
        <taxon>Galloanserae</taxon>
        <taxon>Galliformes</taxon>
        <taxon>Phasianidae</taxon>
        <taxon>Phasianinae</taxon>
        <taxon>Gallus</taxon>
    </lineage>
</organism>
<accession>P51030</accession>
<reference key="1">
    <citation type="journal article" date="1993" name="Development">
        <title>Cwnt-8C: a novel Wnt gene with a potential role in primitive streak formation and hindbrain organization.</title>
        <authorList>
            <person name="Hume C.R."/>
            <person name="Dodd J."/>
        </authorList>
    </citation>
    <scope>NUCLEOTIDE SEQUENCE [MRNA]</scope>
    <source>
        <strain>White leghorn</strain>
    </source>
</reference>
<comment type="function">
    <text>Ligand for members of the frizzled family of seven transmembrane receptors. Probable developmental protein. Is likely to signal over only few cell diameters. May be involved in the regulation of axis formation and in the rhombomere specification.</text>
</comment>
<comment type="subcellular location">
    <subcellularLocation>
        <location>Secreted</location>
        <location>Extracellular space</location>
        <location>Extracellular matrix</location>
    </subcellularLocation>
</comment>
<comment type="tissue specificity">
    <text>Cells that form rhombomere 4. Hensen node and the neural plate immediately anterior to it.</text>
</comment>
<comment type="developmental stage">
    <text>Expressed during embryogenesis.</text>
</comment>
<comment type="PTM">
    <text evidence="1 2">Palmitoleoylation is required for efficient binding to frizzled receptors (By similarity). Depalmitoleoylation leads to Wnt signaling pathway inhibition (By similarity).</text>
</comment>
<comment type="PTM">
    <text evidence="1">Proteolytic processing by tiki1 and tiki2 promotes oxidation and formation of large disulfide-bond oligomers, leading to inactivation of wnt8c.</text>
</comment>
<comment type="similarity">
    <text evidence="4">Belongs to the Wnt family.</text>
</comment>
<proteinExistence type="evidence at transcript level"/>